<organism>
    <name type="scientific">Streptococcus mutans serotype c (strain ATCC 700610 / UA159)</name>
    <dbReference type="NCBI Taxonomy" id="210007"/>
    <lineage>
        <taxon>Bacteria</taxon>
        <taxon>Bacillati</taxon>
        <taxon>Bacillota</taxon>
        <taxon>Bacilli</taxon>
        <taxon>Lactobacillales</taxon>
        <taxon>Streptococcaceae</taxon>
        <taxon>Streptococcus</taxon>
    </lineage>
</organism>
<evidence type="ECO:0000255" key="1">
    <source>
        <dbReference type="HAMAP-Rule" id="MF_00193"/>
    </source>
</evidence>
<feature type="chain" id="PRO_0000152205" description="NH(3)-dependent NAD(+) synthetase">
    <location>
        <begin position="1"/>
        <end position="274"/>
    </location>
</feature>
<feature type="binding site" evidence="1">
    <location>
        <begin position="46"/>
        <end position="53"/>
    </location>
    <ligand>
        <name>ATP</name>
        <dbReference type="ChEBI" id="CHEBI:30616"/>
    </ligand>
</feature>
<feature type="binding site" evidence="1">
    <location>
        <position position="52"/>
    </location>
    <ligand>
        <name>Mg(2+)</name>
        <dbReference type="ChEBI" id="CHEBI:18420"/>
    </ligand>
</feature>
<feature type="binding site" evidence="1">
    <location>
        <position position="140"/>
    </location>
    <ligand>
        <name>deamido-NAD(+)</name>
        <dbReference type="ChEBI" id="CHEBI:58437"/>
    </ligand>
</feature>
<feature type="binding site" evidence="1">
    <location>
        <position position="160"/>
    </location>
    <ligand>
        <name>ATP</name>
        <dbReference type="ChEBI" id="CHEBI:30616"/>
    </ligand>
</feature>
<feature type="binding site" evidence="1">
    <location>
        <position position="165"/>
    </location>
    <ligand>
        <name>Mg(2+)</name>
        <dbReference type="ChEBI" id="CHEBI:18420"/>
    </ligand>
</feature>
<feature type="binding site" evidence="1">
    <location>
        <position position="173"/>
    </location>
    <ligand>
        <name>deamido-NAD(+)</name>
        <dbReference type="ChEBI" id="CHEBI:58437"/>
    </ligand>
</feature>
<feature type="binding site" evidence="1">
    <location>
        <position position="180"/>
    </location>
    <ligand>
        <name>deamido-NAD(+)</name>
        <dbReference type="ChEBI" id="CHEBI:58437"/>
    </ligand>
</feature>
<feature type="binding site" evidence="1">
    <location>
        <position position="189"/>
    </location>
    <ligand>
        <name>ATP</name>
        <dbReference type="ChEBI" id="CHEBI:30616"/>
    </ligand>
</feature>
<feature type="binding site" evidence="1">
    <location>
        <position position="211"/>
    </location>
    <ligand>
        <name>ATP</name>
        <dbReference type="ChEBI" id="CHEBI:30616"/>
    </ligand>
</feature>
<feature type="binding site" evidence="1">
    <location>
        <begin position="260"/>
        <end position="261"/>
    </location>
    <ligand>
        <name>deamido-NAD(+)</name>
        <dbReference type="ChEBI" id="CHEBI:58437"/>
    </ligand>
</feature>
<name>NADE_STRMU</name>
<sequence>MSLQEDIITQLGVKPKIDAQEEIRKSIDFLKAYMKKHGFLKSYVLGISGGQDSSLAGRLAQLAIEELRHETGDNGYKFIAIRLPYGVQADEDDAQRALNFIQPDVSLAINIKPAVDGEVAALAEAGVQVSDFNKGNIKARQRMISQYAVAGENGGAVIGTDHAAENITGFFTKFGDGGADILPLYRLNKRQGKQLLAELGADKALYEKIPTADLEENKPGIADEVALGVTYNDIDDYLEGKQVSPAAQKIIENWWNKTEHKRHLPISIFDDFWK</sequence>
<protein>
    <recommendedName>
        <fullName evidence="1">NH(3)-dependent NAD(+) synthetase</fullName>
        <ecNumber evidence="1">6.3.1.5</ecNumber>
    </recommendedName>
</protein>
<proteinExistence type="inferred from homology"/>
<accession>Q8CWY4</accession>
<reference key="1">
    <citation type="journal article" date="2002" name="Proc. Natl. Acad. Sci. U.S.A.">
        <title>Genome sequence of Streptococcus mutans UA159, a cariogenic dental pathogen.</title>
        <authorList>
            <person name="Ajdic D.J."/>
            <person name="McShan W.M."/>
            <person name="McLaughlin R.E."/>
            <person name="Savic G."/>
            <person name="Chang J."/>
            <person name="Carson M.B."/>
            <person name="Primeaux C."/>
            <person name="Tian R."/>
            <person name="Kenton S."/>
            <person name="Jia H.G."/>
            <person name="Lin S.P."/>
            <person name="Qian Y."/>
            <person name="Li S."/>
            <person name="Zhu H."/>
            <person name="Najar F.Z."/>
            <person name="Lai H."/>
            <person name="White J."/>
            <person name="Roe B.A."/>
            <person name="Ferretti J.J."/>
        </authorList>
    </citation>
    <scope>NUCLEOTIDE SEQUENCE [LARGE SCALE GENOMIC DNA]</scope>
    <source>
        <strain>ATCC 700610 / UA159</strain>
    </source>
</reference>
<keyword id="KW-0067">ATP-binding</keyword>
<keyword id="KW-0436">Ligase</keyword>
<keyword id="KW-0460">Magnesium</keyword>
<keyword id="KW-0479">Metal-binding</keyword>
<keyword id="KW-0520">NAD</keyword>
<keyword id="KW-0547">Nucleotide-binding</keyword>
<keyword id="KW-1185">Reference proteome</keyword>
<dbReference type="EC" id="6.3.1.5" evidence="1"/>
<dbReference type="EMBL" id="AE014133">
    <property type="protein sequence ID" value="AAN58214.1"/>
    <property type="molecule type" value="Genomic_DNA"/>
</dbReference>
<dbReference type="RefSeq" id="NP_720908.1">
    <property type="nucleotide sequence ID" value="NC_004350.2"/>
</dbReference>
<dbReference type="RefSeq" id="WP_002262098.1">
    <property type="nucleotide sequence ID" value="NC_004350.2"/>
</dbReference>
<dbReference type="SMR" id="Q8CWY4"/>
<dbReference type="STRING" id="210007.SMU_465"/>
<dbReference type="KEGG" id="smu:SMU_465"/>
<dbReference type="PATRIC" id="fig|210007.7.peg.408"/>
<dbReference type="eggNOG" id="COG0171">
    <property type="taxonomic scope" value="Bacteria"/>
</dbReference>
<dbReference type="HOGENOM" id="CLU_059327_3_0_9"/>
<dbReference type="OrthoDB" id="9803818at2"/>
<dbReference type="PhylomeDB" id="Q8CWY4"/>
<dbReference type="UniPathway" id="UPA00253">
    <property type="reaction ID" value="UER00333"/>
</dbReference>
<dbReference type="Proteomes" id="UP000002512">
    <property type="component" value="Chromosome"/>
</dbReference>
<dbReference type="GO" id="GO:0005737">
    <property type="term" value="C:cytoplasm"/>
    <property type="evidence" value="ECO:0007669"/>
    <property type="project" value="InterPro"/>
</dbReference>
<dbReference type="GO" id="GO:0005524">
    <property type="term" value="F:ATP binding"/>
    <property type="evidence" value="ECO:0007669"/>
    <property type="project" value="UniProtKB-UniRule"/>
</dbReference>
<dbReference type="GO" id="GO:0004359">
    <property type="term" value="F:glutaminase activity"/>
    <property type="evidence" value="ECO:0007669"/>
    <property type="project" value="InterPro"/>
</dbReference>
<dbReference type="GO" id="GO:0046872">
    <property type="term" value="F:metal ion binding"/>
    <property type="evidence" value="ECO:0007669"/>
    <property type="project" value="UniProtKB-KW"/>
</dbReference>
<dbReference type="GO" id="GO:0003952">
    <property type="term" value="F:NAD+ synthase (glutamine-hydrolyzing) activity"/>
    <property type="evidence" value="ECO:0007669"/>
    <property type="project" value="InterPro"/>
</dbReference>
<dbReference type="GO" id="GO:0008795">
    <property type="term" value="F:NAD+ synthase activity"/>
    <property type="evidence" value="ECO:0007669"/>
    <property type="project" value="UniProtKB-UniRule"/>
</dbReference>
<dbReference type="GO" id="GO:0009435">
    <property type="term" value="P:NAD biosynthetic process"/>
    <property type="evidence" value="ECO:0007669"/>
    <property type="project" value="UniProtKB-UniRule"/>
</dbReference>
<dbReference type="CDD" id="cd00553">
    <property type="entry name" value="NAD_synthase"/>
    <property type="match status" value="1"/>
</dbReference>
<dbReference type="FunFam" id="3.40.50.620:FF:000015">
    <property type="entry name" value="NH(3)-dependent NAD(+) synthetase"/>
    <property type="match status" value="1"/>
</dbReference>
<dbReference type="Gene3D" id="3.40.50.620">
    <property type="entry name" value="HUPs"/>
    <property type="match status" value="1"/>
</dbReference>
<dbReference type="HAMAP" id="MF_00193">
    <property type="entry name" value="NadE_ammonia_dep"/>
    <property type="match status" value="1"/>
</dbReference>
<dbReference type="InterPro" id="IPR022310">
    <property type="entry name" value="NAD/GMP_synthase"/>
</dbReference>
<dbReference type="InterPro" id="IPR003694">
    <property type="entry name" value="NAD_synthase"/>
</dbReference>
<dbReference type="InterPro" id="IPR022926">
    <property type="entry name" value="NH(3)-dep_NAD(+)_synth"/>
</dbReference>
<dbReference type="InterPro" id="IPR014729">
    <property type="entry name" value="Rossmann-like_a/b/a_fold"/>
</dbReference>
<dbReference type="NCBIfam" id="TIGR00552">
    <property type="entry name" value="nadE"/>
    <property type="match status" value="1"/>
</dbReference>
<dbReference type="NCBIfam" id="NF001979">
    <property type="entry name" value="PRK00768.1"/>
    <property type="match status" value="1"/>
</dbReference>
<dbReference type="PANTHER" id="PTHR23090">
    <property type="entry name" value="NH 3 /GLUTAMINE-DEPENDENT NAD + SYNTHETASE"/>
    <property type="match status" value="1"/>
</dbReference>
<dbReference type="PANTHER" id="PTHR23090:SF7">
    <property type="entry name" value="NH(3)-DEPENDENT NAD(+) SYNTHETASE"/>
    <property type="match status" value="1"/>
</dbReference>
<dbReference type="Pfam" id="PF02540">
    <property type="entry name" value="NAD_synthase"/>
    <property type="match status" value="1"/>
</dbReference>
<dbReference type="SUPFAM" id="SSF52402">
    <property type="entry name" value="Adenine nucleotide alpha hydrolases-like"/>
    <property type="match status" value="1"/>
</dbReference>
<comment type="function">
    <text evidence="1">Catalyzes the ATP-dependent amidation of deamido-NAD to form NAD. Uses ammonia as a nitrogen source.</text>
</comment>
<comment type="catalytic activity">
    <reaction evidence="1">
        <text>deamido-NAD(+) + NH4(+) + ATP = AMP + diphosphate + NAD(+) + H(+)</text>
        <dbReference type="Rhea" id="RHEA:21188"/>
        <dbReference type="ChEBI" id="CHEBI:15378"/>
        <dbReference type="ChEBI" id="CHEBI:28938"/>
        <dbReference type="ChEBI" id="CHEBI:30616"/>
        <dbReference type="ChEBI" id="CHEBI:33019"/>
        <dbReference type="ChEBI" id="CHEBI:57540"/>
        <dbReference type="ChEBI" id="CHEBI:58437"/>
        <dbReference type="ChEBI" id="CHEBI:456215"/>
        <dbReference type="EC" id="6.3.1.5"/>
    </reaction>
</comment>
<comment type="pathway">
    <text evidence="1">Cofactor biosynthesis; NAD(+) biosynthesis; NAD(+) from deamido-NAD(+) (ammonia route): step 1/1.</text>
</comment>
<comment type="subunit">
    <text evidence="1">Homodimer.</text>
</comment>
<comment type="similarity">
    <text evidence="1">Belongs to the NAD synthetase family.</text>
</comment>
<gene>
    <name evidence="1" type="primary">nadE</name>
    <name type="ordered locus">SMU_465</name>
</gene>